<comment type="function">
    <text evidence="3 6">Participates in the biosynthesis of phosphatidylinositol 4,5-bisphosphate. Preferentially utilizes GTP, rather than ATP, for PI(5)P phosphorylation and its activity reflects changes in direct proportion to the physiological GTP concentration. Its GTP-sensing activity is critical for metabolic adaptation. In collaboration with PIP4K2A, has a role in mediating autophagy in times of nutrient stress (PubMed:29727621). Required for autophagosome-lysosome fusion and the regulation of cellular lipid metabolism (PubMed:29727621). PIP4Ks negatively regulate insulin signaling through a catalytic-independent mechanism. They interact with PIP5Ks and suppress PIP5K-mediated PtdIns(4,5)P2 synthesis and insulin-dependent conversion to PtdIns(3,4,5)P3 (By similarity).</text>
</comment>
<comment type="catalytic activity">
    <reaction evidence="3">
        <text>a 1,2-diacyl-sn-glycero-3-phospho-(1D-myo-inositol-5-phosphate) + ATP = a 1,2-diacyl-sn-glycero-3-phospho-(1D-myo-inositol-4,5-bisphosphate) + ADP + H(+)</text>
        <dbReference type="Rhea" id="RHEA:12280"/>
        <dbReference type="ChEBI" id="CHEBI:15378"/>
        <dbReference type="ChEBI" id="CHEBI:30616"/>
        <dbReference type="ChEBI" id="CHEBI:57795"/>
        <dbReference type="ChEBI" id="CHEBI:58456"/>
        <dbReference type="ChEBI" id="CHEBI:456216"/>
        <dbReference type="EC" id="2.7.1.149"/>
    </reaction>
    <physiologicalReaction direction="left-to-right" evidence="3">
        <dbReference type="Rhea" id="RHEA:12281"/>
    </physiologicalReaction>
</comment>
<comment type="catalytic activity">
    <reaction evidence="3">
        <text>1,2-dihexadecanoyl-sn-glycero-3-phospho-(1D-myo-inositol-5-phosphate) + ATP = 1,2-dihexadecanoyl-sn-glycero-3-phospho-(1D-myo-inositol-4,5-bisphosphate) + ADP + H(+)</text>
        <dbReference type="Rhea" id="RHEA:55992"/>
        <dbReference type="ChEBI" id="CHEBI:15378"/>
        <dbReference type="ChEBI" id="CHEBI:30616"/>
        <dbReference type="ChEBI" id="CHEBI:83423"/>
        <dbReference type="ChEBI" id="CHEBI:84968"/>
        <dbReference type="ChEBI" id="CHEBI:456216"/>
    </reaction>
    <physiologicalReaction direction="left-to-right" evidence="3">
        <dbReference type="Rhea" id="RHEA:55993"/>
    </physiologicalReaction>
</comment>
<comment type="catalytic activity">
    <reaction evidence="3">
        <text>1,2-dihexadecanoyl-sn-glycero-3-phospho-(1D-myo-inositol-5-phosphate) + GTP = 1,2-dihexadecanoyl-sn-glycero-3-phospho-(1D-myo-inositol-4,5-bisphosphate) + GDP + H(+)</text>
        <dbReference type="Rhea" id="RHEA:55964"/>
        <dbReference type="ChEBI" id="CHEBI:15378"/>
        <dbReference type="ChEBI" id="CHEBI:37565"/>
        <dbReference type="ChEBI" id="CHEBI:58189"/>
        <dbReference type="ChEBI" id="CHEBI:83423"/>
        <dbReference type="ChEBI" id="CHEBI:84968"/>
    </reaction>
    <physiologicalReaction direction="left-to-right" evidence="3">
        <dbReference type="Rhea" id="RHEA:55965"/>
    </physiologicalReaction>
</comment>
<comment type="subunit">
    <text evidence="3 4">Homodimer. Binds TNFRSF1A. Interacts with PIP4K2A; the interaction suppresses ubiquitination by the SPOP/CUL3 complex (By similarity). Probably interacts with PIP5K1A; the interaction inhibits PIP5K1A kinase activity (By similarity).</text>
</comment>
<comment type="subcellular location">
    <subcellularLocation>
        <location evidence="1">Endoplasmic reticulum membrane</location>
        <topology evidence="1">Peripheral membrane protein</topology>
    </subcellularLocation>
    <subcellularLocation>
        <location evidence="1">Cell membrane</location>
        <topology evidence="1">Peripheral membrane protein</topology>
    </subcellularLocation>
    <subcellularLocation>
        <location evidence="1">Nucleus</location>
    </subcellularLocation>
    <subcellularLocation>
        <location evidence="1">Cytoplasm</location>
    </subcellularLocation>
    <text evidence="1">Associated with the plasma membrane and the endoplasmic reticulum.</text>
</comment>
<comment type="PTM">
    <text evidence="3">Ubiquitinated by the SPOP/CUL3 complex. Ubiquitination is stimulated by PtdIns5P levels.</text>
</comment>
<comment type="PTM">
    <text evidence="3">Phosphorylated on serine residues.</text>
</comment>
<evidence type="ECO:0000250" key="1"/>
<evidence type="ECO:0000250" key="2">
    <source>
        <dbReference type="UniProtKB" id="P48426"/>
    </source>
</evidence>
<evidence type="ECO:0000250" key="3">
    <source>
        <dbReference type="UniProtKB" id="P78356"/>
    </source>
</evidence>
<evidence type="ECO:0000250" key="4">
    <source>
        <dbReference type="UniProtKB" id="Q8TBX8"/>
    </source>
</evidence>
<evidence type="ECO:0000255" key="5">
    <source>
        <dbReference type="PROSITE-ProRule" id="PRU00781"/>
    </source>
</evidence>
<evidence type="ECO:0000269" key="6">
    <source>
    </source>
</evidence>
<evidence type="ECO:0000305" key="7"/>
<evidence type="ECO:0000312" key="8">
    <source>
        <dbReference type="MGI" id="MGI:1934234"/>
    </source>
</evidence>
<evidence type="ECO:0007744" key="9">
    <source>
    </source>
</evidence>
<name>PI42B_MOUSE</name>
<accession>Q80XI4</accession>
<accession>Q8VHB2</accession>
<protein>
    <recommendedName>
        <fullName evidence="7">Phosphatidylinositol 5-phosphate 4-kinase type-2 beta</fullName>
        <ecNumber evidence="3">2.7.1.149</ecNumber>
    </recommendedName>
    <alternativeName>
        <fullName>1-phosphatidylinositol 5-phosphate 4-kinase 2-beta</fullName>
    </alternativeName>
    <alternativeName>
        <fullName>Diphosphoinositide kinase 2-beta</fullName>
    </alternativeName>
    <alternativeName>
        <fullName>Phosphatidylinositol 5-phosphate 4-kinase type II beta</fullName>
        <shortName>PI(5)P 4-kinase type II beta</shortName>
        <shortName>PIP4KII-beta</shortName>
    </alternativeName>
    <alternativeName>
        <fullName>PtdIns(5)P-4-kinase isoform 2-beta</fullName>
    </alternativeName>
</protein>
<dbReference type="EC" id="2.7.1.149" evidence="3"/>
<dbReference type="EMBL" id="BC047282">
    <property type="protein sequence ID" value="AAH47282.1"/>
    <property type="molecule type" value="mRNA"/>
</dbReference>
<dbReference type="EMBL" id="AY050219">
    <property type="protein sequence ID" value="AAL18245.1"/>
    <property type="molecule type" value="mRNA"/>
</dbReference>
<dbReference type="CCDS" id="CCDS25329.1"/>
<dbReference type="RefSeq" id="NP_473392.1">
    <property type="nucleotide sequence ID" value="NM_054051.1"/>
</dbReference>
<dbReference type="SMR" id="Q80XI4"/>
<dbReference type="BioGRID" id="223820">
    <property type="interactions" value="15"/>
</dbReference>
<dbReference type="FunCoup" id="Q80XI4">
    <property type="interactions" value="2767"/>
</dbReference>
<dbReference type="IntAct" id="Q80XI4">
    <property type="interactions" value="1"/>
</dbReference>
<dbReference type="STRING" id="10090.ENSMUSP00000018691"/>
<dbReference type="GlyGen" id="Q80XI4">
    <property type="glycosylation" value="2 sites, 1 N-linked glycan (1 site), 1 O-linked glycan (1 site)"/>
</dbReference>
<dbReference type="iPTMnet" id="Q80XI4"/>
<dbReference type="PhosphoSitePlus" id="Q80XI4"/>
<dbReference type="SwissPalm" id="Q80XI4"/>
<dbReference type="PaxDb" id="10090-ENSMUSP00000018691"/>
<dbReference type="ProteomicsDB" id="289564"/>
<dbReference type="Pumba" id="Q80XI4"/>
<dbReference type="Antibodypedia" id="72369">
    <property type="antibodies" value="182 antibodies from 26 providers"/>
</dbReference>
<dbReference type="DNASU" id="108083"/>
<dbReference type="Ensembl" id="ENSMUST00000018691.9">
    <property type="protein sequence ID" value="ENSMUSP00000018691.9"/>
    <property type="gene ID" value="ENSMUSG00000018547.9"/>
</dbReference>
<dbReference type="GeneID" id="108083"/>
<dbReference type="KEGG" id="mmu:108083"/>
<dbReference type="UCSC" id="uc007leq.1">
    <property type="organism name" value="mouse"/>
</dbReference>
<dbReference type="AGR" id="MGI:1934234"/>
<dbReference type="CTD" id="8396"/>
<dbReference type="MGI" id="MGI:1934234">
    <property type="gene designation" value="Pip4k2b"/>
</dbReference>
<dbReference type="VEuPathDB" id="HostDB:ENSMUSG00000018547"/>
<dbReference type="eggNOG" id="KOG0229">
    <property type="taxonomic scope" value="Eukaryota"/>
</dbReference>
<dbReference type="GeneTree" id="ENSGT00940000159874"/>
<dbReference type="HOGENOM" id="CLU_004312_7_0_1"/>
<dbReference type="InParanoid" id="Q80XI4"/>
<dbReference type="OMA" id="MKSHENA"/>
<dbReference type="OrthoDB" id="20783at2759"/>
<dbReference type="PhylomeDB" id="Q80XI4"/>
<dbReference type="TreeFam" id="TF354315"/>
<dbReference type="Reactome" id="R-MMU-1660499">
    <property type="pathway name" value="Synthesis of PIPs at the plasma membrane"/>
</dbReference>
<dbReference type="Reactome" id="R-MMU-6811555">
    <property type="pathway name" value="PI5P Regulates TP53 Acetylation"/>
</dbReference>
<dbReference type="Reactome" id="R-MMU-6811558">
    <property type="pathway name" value="PI5P, PP2A and IER3 Regulate PI3K/AKT Signaling"/>
</dbReference>
<dbReference type="Reactome" id="R-MMU-8847453">
    <property type="pathway name" value="Synthesis of PIPs in the nucleus"/>
</dbReference>
<dbReference type="BioGRID-ORCS" id="108083">
    <property type="hits" value="1 hit in 78 CRISPR screens"/>
</dbReference>
<dbReference type="CD-CODE" id="CE726F99">
    <property type="entry name" value="Postsynaptic density"/>
</dbReference>
<dbReference type="ChiTaRS" id="Pip4k2b">
    <property type="organism name" value="mouse"/>
</dbReference>
<dbReference type="PRO" id="PR:Q80XI4"/>
<dbReference type="Proteomes" id="UP000000589">
    <property type="component" value="Chromosome 11"/>
</dbReference>
<dbReference type="RNAct" id="Q80XI4">
    <property type="molecule type" value="protein"/>
</dbReference>
<dbReference type="Bgee" id="ENSMUSG00000018547">
    <property type="expression patterns" value="Expressed in cortical plate and 256 other cell types or tissues"/>
</dbReference>
<dbReference type="ExpressionAtlas" id="Q80XI4">
    <property type="expression patterns" value="baseline and differential"/>
</dbReference>
<dbReference type="GO" id="GO:0005776">
    <property type="term" value="C:autophagosome"/>
    <property type="evidence" value="ECO:0007669"/>
    <property type="project" value="Ensembl"/>
</dbReference>
<dbReference type="GO" id="GO:0005789">
    <property type="term" value="C:endoplasmic reticulum membrane"/>
    <property type="evidence" value="ECO:0007669"/>
    <property type="project" value="UniProtKB-SubCell"/>
</dbReference>
<dbReference type="GO" id="GO:0005654">
    <property type="term" value="C:nucleoplasm"/>
    <property type="evidence" value="ECO:0007669"/>
    <property type="project" value="Ensembl"/>
</dbReference>
<dbReference type="GO" id="GO:0005886">
    <property type="term" value="C:plasma membrane"/>
    <property type="evidence" value="ECO:0007669"/>
    <property type="project" value="UniProtKB-SubCell"/>
</dbReference>
<dbReference type="GO" id="GO:0016308">
    <property type="term" value="F:1-phosphatidylinositol-4-phosphate 5-kinase activity"/>
    <property type="evidence" value="ECO:0000250"/>
    <property type="project" value="UniProtKB"/>
</dbReference>
<dbReference type="GO" id="GO:0016309">
    <property type="term" value="F:1-phosphatidylinositol-5-phosphate 4-kinase activity"/>
    <property type="evidence" value="ECO:0007669"/>
    <property type="project" value="UniProtKB-EC"/>
</dbReference>
<dbReference type="GO" id="GO:0005524">
    <property type="term" value="F:ATP binding"/>
    <property type="evidence" value="ECO:0000250"/>
    <property type="project" value="UniProtKB"/>
</dbReference>
<dbReference type="GO" id="GO:0005525">
    <property type="term" value="F:GTP binding"/>
    <property type="evidence" value="ECO:0000250"/>
    <property type="project" value="UniProtKB"/>
</dbReference>
<dbReference type="GO" id="GO:0042803">
    <property type="term" value="F:protein homodimerization activity"/>
    <property type="evidence" value="ECO:0007669"/>
    <property type="project" value="Ensembl"/>
</dbReference>
<dbReference type="GO" id="GO:1902635">
    <property type="term" value="P:1-phosphatidyl-1D-myo-inositol 4,5-bisphosphate biosynthetic process"/>
    <property type="evidence" value="ECO:0000250"/>
    <property type="project" value="UniProtKB"/>
</dbReference>
<dbReference type="GO" id="GO:0061909">
    <property type="term" value="P:autophagosome-lysosome fusion"/>
    <property type="evidence" value="ECO:0000315"/>
    <property type="project" value="UniProtKB"/>
</dbReference>
<dbReference type="GO" id="GO:0046627">
    <property type="term" value="P:negative regulation of insulin receptor signaling pathway"/>
    <property type="evidence" value="ECO:0000250"/>
    <property type="project" value="UniProtKB"/>
</dbReference>
<dbReference type="GO" id="GO:0046488">
    <property type="term" value="P:phosphatidylinositol metabolic process"/>
    <property type="evidence" value="ECO:0000314"/>
    <property type="project" value="MGI"/>
</dbReference>
<dbReference type="GO" id="GO:2000786">
    <property type="term" value="P:positive regulation of autophagosome assembly"/>
    <property type="evidence" value="ECO:0007669"/>
    <property type="project" value="Ensembl"/>
</dbReference>
<dbReference type="GO" id="GO:0010506">
    <property type="term" value="P:regulation of autophagy"/>
    <property type="evidence" value="ECO:0000315"/>
    <property type="project" value="UniProtKB"/>
</dbReference>
<dbReference type="CDD" id="cd17310">
    <property type="entry name" value="PIPKc_PIP5K2B"/>
    <property type="match status" value="1"/>
</dbReference>
<dbReference type="FunFam" id="3.30.800.10:FF:000002">
    <property type="entry name" value="Phosphatidylinositol 5-phosphate 4-kinase type-2 beta"/>
    <property type="match status" value="1"/>
</dbReference>
<dbReference type="FunFam" id="3.30.810.10:FF:000003">
    <property type="entry name" value="Phosphatidylinositol 5-phosphate 4-kinase type-2 beta"/>
    <property type="match status" value="1"/>
</dbReference>
<dbReference type="FunFam" id="3.30.810.10:FF:000004">
    <property type="entry name" value="Phosphatidylinositol 5-phosphate 4-kinase type-2 beta"/>
    <property type="match status" value="1"/>
</dbReference>
<dbReference type="Gene3D" id="3.30.810.10">
    <property type="entry name" value="2-Layer Sandwich"/>
    <property type="match status" value="2"/>
</dbReference>
<dbReference type="Gene3D" id="3.30.800.10">
    <property type="entry name" value="Phosphatidylinositol Phosphate Kinase II Beta"/>
    <property type="match status" value="1"/>
</dbReference>
<dbReference type="InterPro" id="IPR027483">
    <property type="entry name" value="PInositol-4-P-4/5-kinase_C_sf"/>
</dbReference>
<dbReference type="InterPro" id="IPR002498">
    <property type="entry name" value="PInositol-4-P-4/5-kinase_core"/>
</dbReference>
<dbReference type="InterPro" id="IPR027484">
    <property type="entry name" value="PInositol-4-P-5-kinase_N"/>
</dbReference>
<dbReference type="InterPro" id="IPR023610">
    <property type="entry name" value="PInositol-4/5-P-5/4-kinase"/>
</dbReference>
<dbReference type="PANTHER" id="PTHR23086:SF22">
    <property type="entry name" value="PHOSPHATIDYLINOSITOL 5-PHOSPHATE 4-KINASE TYPE-2 BETA"/>
    <property type="match status" value="1"/>
</dbReference>
<dbReference type="PANTHER" id="PTHR23086">
    <property type="entry name" value="PHOSPHATIDYLINOSITOL-4-PHOSPHATE 5-KINASE"/>
    <property type="match status" value="1"/>
</dbReference>
<dbReference type="Pfam" id="PF01504">
    <property type="entry name" value="PIP5K"/>
    <property type="match status" value="1"/>
</dbReference>
<dbReference type="SMART" id="SM00330">
    <property type="entry name" value="PIPKc"/>
    <property type="match status" value="1"/>
</dbReference>
<dbReference type="SUPFAM" id="SSF56104">
    <property type="entry name" value="SAICAR synthase-like"/>
    <property type="match status" value="1"/>
</dbReference>
<dbReference type="PROSITE" id="PS51455">
    <property type="entry name" value="PIPK"/>
    <property type="match status" value="1"/>
</dbReference>
<reference key="1">
    <citation type="journal article" date="2004" name="Genome Res.">
        <title>The status, quality, and expansion of the NIH full-length cDNA project: the Mammalian Gene Collection (MGC).</title>
        <authorList>
            <consortium name="The MGC Project Team"/>
        </authorList>
    </citation>
    <scope>NUCLEOTIDE SEQUENCE [LARGE SCALE MRNA]</scope>
    <source>
        <tissue>Eye</tissue>
    </source>
</reference>
<reference key="2">
    <citation type="journal article" date="2002" name="Cytogenet. Genome Res.">
        <title>Mutagenic transgene insertion into a region of high gene density and multiple linkage disruptions on mouse chromosome 11.</title>
        <authorList>
            <person name="Kleiter N."/>
            <person name="Artner I."/>
            <person name="Gmachl N."/>
            <person name="Ghaffari-Tabrizi N."/>
            <person name="Kratochwil K."/>
        </authorList>
    </citation>
    <scope>NUCLEOTIDE SEQUENCE [MRNA] OF 25-416</scope>
    <source>
        <strain>Swiss Webster / NIH</strain>
    </source>
</reference>
<reference key="3">
    <citation type="submission" date="2009-01" db="UniProtKB">
        <authorList>
            <person name="Lubec G."/>
            <person name="Sunyer B."/>
            <person name="Chen W.-Q."/>
        </authorList>
    </citation>
    <scope>PROTEIN SEQUENCE OF 79-86; 110-123; 189-202; 267-275; 291-301 AND 389-405</scope>
    <scope>IDENTIFICATION BY MASS SPECTROMETRY</scope>
    <source>
        <strain>OF1</strain>
        <tissue>Hippocampus</tissue>
    </source>
</reference>
<reference key="4">
    <citation type="journal article" date="2010" name="Cell">
        <title>A tissue-specific atlas of mouse protein phosphorylation and expression.</title>
        <authorList>
            <person name="Huttlin E.L."/>
            <person name="Jedrychowski M.P."/>
            <person name="Elias J.E."/>
            <person name="Goswami T."/>
            <person name="Rad R."/>
            <person name="Beausoleil S.A."/>
            <person name="Villen J."/>
            <person name="Haas W."/>
            <person name="Sowa M.E."/>
            <person name="Gygi S.P."/>
        </authorList>
    </citation>
    <scope>PHOSPHORYLATION [LARGE SCALE ANALYSIS] AT THR-322 AND SER-326</scope>
    <scope>IDENTIFICATION BY MASS SPECTROMETRY [LARGE SCALE ANALYSIS]</scope>
    <source>
        <tissue>Brain</tissue>
        <tissue>Kidney</tissue>
        <tissue>Spleen</tissue>
    </source>
</reference>
<reference key="5">
    <citation type="journal article" date="2018" name="Mol. Cell">
        <title>Phosphatidylinositol-5-Phosphate 4-Kinases Regulate Cellular Lipid Metabolism By Facilitating Autophagy.</title>
        <authorList>
            <person name="Lundquist M.R."/>
            <person name="Goncalves M.D."/>
            <person name="Loughran R.M."/>
            <person name="Possik E."/>
            <person name="Vijayaraghavan T."/>
            <person name="Yang A."/>
            <person name="Pauli C."/>
            <person name="Ravi A."/>
            <person name="Verma A."/>
            <person name="Yang Z."/>
            <person name="Johnson J.L."/>
            <person name="Wong J.C.Y."/>
            <person name="Ma Y."/>
            <person name="Hwang K.S."/>
            <person name="Weinkove D."/>
            <person name="Divecha N."/>
            <person name="Asara J.M."/>
            <person name="Elemento O."/>
            <person name="Rubin M.A."/>
            <person name="Kimmelman A.C."/>
            <person name="Pause A."/>
            <person name="Cantley L.C."/>
            <person name="Emerling B.M."/>
        </authorList>
    </citation>
    <scope>FUNCTION</scope>
</reference>
<gene>
    <name evidence="8" type="primary">Pip4k2b</name>
    <name type="synonym">Pip5k2b</name>
</gene>
<keyword id="KW-0007">Acetylation</keyword>
<keyword id="KW-0067">ATP-binding</keyword>
<keyword id="KW-1003">Cell membrane</keyword>
<keyword id="KW-0963">Cytoplasm</keyword>
<keyword id="KW-0903">Direct protein sequencing</keyword>
<keyword id="KW-0256">Endoplasmic reticulum</keyword>
<keyword id="KW-0342">GTP-binding</keyword>
<keyword id="KW-0418">Kinase</keyword>
<keyword id="KW-0443">Lipid metabolism</keyword>
<keyword id="KW-0472">Membrane</keyword>
<keyword id="KW-0547">Nucleotide-binding</keyword>
<keyword id="KW-0539">Nucleus</keyword>
<keyword id="KW-0597">Phosphoprotein</keyword>
<keyword id="KW-1185">Reference proteome</keyword>
<keyword id="KW-0808">Transferase</keyword>
<keyword id="KW-0832">Ubl conjugation</keyword>
<proteinExistence type="evidence at protein level"/>
<feature type="initiator methionine" description="Removed" evidence="3">
    <location>
        <position position="1"/>
    </location>
</feature>
<feature type="chain" id="PRO_0000185471" description="Phosphatidylinositol 5-phosphate 4-kinase type-2 beta">
    <location>
        <begin position="2"/>
        <end position="416"/>
    </location>
</feature>
<feature type="domain" description="PIPK" evidence="5">
    <location>
        <begin position="38"/>
        <end position="415"/>
    </location>
</feature>
<feature type="region of interest" description="Required for interaction with PIP5K1A" evidence="4">
    <location>
        <begin position="64"/>
        <end position="70"/>
    </location>
</feature>
<feature type="binding site" evidence="3">
    <location>
        <begin position="202"/>
        <end position="204"/>
    </location>
    <ligand>
        <name>ATP</name>
        <dbReference type="ChEBI" id="CHEBI:30616"/>
    </ligand>
</feature>
<feature type="binding site" evidence="3">
    <location>
        <begin position="203"/>
        <end position="204"/>
    </location>
    <ligand>
        <name>GTP</name>
        <dbReference type="ChEBI" id="CHEBI:37565"/>
    </ligand>
</feature>
<feature type="binding site" evidence="3">
    <location>
        <position position="214"/>
    </location>
    <ligand>
        <name>ATP</name>
        <dbReference type="ChEBI" id="CHEBI:30616"/>
    </ligand>
</feature>
<feature type="binding site" evidence="3">
    <location>
        <position position="214"/>
    </location>
    <ligand>
        <name>GTP</name>
        <dbReference type="ChEBI" id="CHEBI:37565"/>
    </ligand>
</feature>
<feature type="binding site" evidence="3">
    <location>
        <position position="369"/>
    </location>
    <ligand>
        <name>GTP</name>
        <dbReference type="ChEBI" id="CHEBI:37565"/>
    </ligand>
</feature>
<feature type="modified residue" description="N-acetylserine" evidence="3">
    <location>
        <position position="2"/>
    </location>
</feature>
<feature type="modified residue" description="Phosphothreonine" evidence="2">
    <location>
        <position position="8"/>
    </location>
</feature>
<feature type="modified residue" description="Phosphoserine" evidence="2">
    <location>
        <position position="19"/>
    </location>
</feature>
<feature type="modified residue" description="N6-acetyllysine" evidence="2">
    <location>
        <position position="94"/>
    </location>
</feature>
<feature type="modified residue" description="N6-acetyllysine" evidence="3">
    <location>
        <position position="150"/>
    </location>
</feature>
<feature type="modified residue" description="Phosphothreonine" evidence="9">
    <location>
        <position position="322"/>
    </location>
</feature>
<feature type="modified residue" description="Phosphoserine" evidence="9">
    <location>
        <position position="326"/>
    </location>
</feature>
<sequence>MSSNCTSTTAVAVAPLSASKTKTKKKHFVCQKVKLFRASEPILSVLMWGVNHTINELSNVPVPVMLMPDDFKAYSKIKVDNHLFNKENLPSRFKFKEYCPMVFRNLRERFGIDDQDYQNSVTRSAPINSDSQGRCGTRFLTTYDRRFVIKTVSSEDVAEMHNILKKYHQFIVECHGNTLLPQFLGMYRLTVDGVETYMVVTRNVFSHRLTVHRKYDLKGSTVAREASDKEKAKDLPTFKDNDFLNEGQKLHVGEESKKNFLEKLKRDVEFLAQLKIMDYSLLVGIHDVDRAEQEEMEVEERAEEEECENDGVGGSLLCSYGTPPDSPGNLLSFPRFFGPGEFDPSVDVYAMKSHESAPKKEVYFMAIIDILTPYDAKKKAAHAAKTVKHGAGAEISTVNPEQYSKRFNEFMSNILT</sequence>
<organism>
    <name type="scientific">Mus musculus</name>
    <name type="common">Mouse</name>
    <dbReference type="NCBI Taxonomy" id="10090"/>
    <lineage>
        <taxon>Eukaryota</taxon>
        <taxon>Metazoa</taxon>
        <taxon>Chordata</taxon>
        <taxon>Craniata</taxon>
        <taxon>Vertebrata</taxon>
        <taxon>Euteleostomi</taxon>
        <taxon>Mammalia</taxon>
        <taxon>Eutheria</taxon>
        <taxon>Euarchontoglires</taxon>
        <taxon>Glires</taxon>
        <taxon>Rodentia</taxon>
        <taxon>Myomorpha</taxon>
        <taxon>Muroidea</taxon>
        <taxon>Muridae</taxon>
        <taxon>Murinae</taxon>
        <taxon>Mus</taxon>
        <taxon>Mus</taxon>
    </lineage>
</organism>